<evidence type="ECO:0000255" key="1"/>
<evidence type="ECO:0000255" key="2">
    <source>
        <dbReference type="PROSITE-ProRule" id="PRU00521"/>
    </source>
</evidence>
<evidence type="ECO:0000269" key="3">
    <source>
    </source>
</evidence>
<evidence type="ECO:0000305" key="4"/>
<evidence type="ECO:0000312" key="5">
    <source>
        <dbReference type="EMBL" id="AAG42086.1"/>
    </source>
</evidence>
<evidence type="ECO:0000312" key="6">
    <source>
        <dbReference type="EMBL" id="AAI07186.1"/>
    </source>
</evidence>
<evidence type="ECO:0000312" key="7">
    <source>
        <dbReference type="EMBL" id="AAL47870.1"/>
    </source>
</evidence>
<evidence type="ECO:0000312" key="8">
    <source>
        <dbReference type="EMBL" id="BAB79216.1"/>
    </source>
</evidence>
<accession>Q9EQ47</accession>
<accession>B9EKS6</accession>
<accession>Q3B815</accession>
<accession>Q3B816</accession>
<accession>Q8R2E5</accession>
<accession>Q8VIC5</accession>
<dbReference type="EMBL" id="AF291492">
    <property type="protein sequence ID" value="AAG42086.1"/>
    <property type="molecule type" value="Genomic_DNA"/>
</dbReference>
<dbReference type="EMBL" id="AB062899">
    <property type="protein sequence ID" value="BAB79216.1"/>
    <property type="molecule type" value="Genomic_DNA"/>
</dbReference>
<dbReference type="EMBL" id="CH466523">
    <property type="protein sequence ID" value="EDK99272.1"/>
    <property type="molecule type" value="Genomic_DNA"/>
</dbReference>
<dbReference type="EMBL" id="BC107184">
    <property type="protein sequence ID" value="AAI07185.1"/>
    <property type="molecule type" value="mRNA"/>
</dbReference>
<dbReference type="EMBL" id="BC107185">
    <property type="protein sequence ID" value="AAI07186.1"/>
    <property type="molecule type" value="mRNA"/>
</dbReference>
<dbReference type="EMBL" id="BC151088">
    <property type="protein sequence ID" value="AAI51089.1"/>
    <property type="molecule type" value="mRNA"/>
</dbReference>
<dbReference type="EMBL" id="AY065465">
    <property type="protein sequence ID" value="AAL47870.1"/>
    <property type="status" value="ALT_FRAME"/>
    <property type="molecule type" value="Genomic_DNA"/>
</dbReference>
<dbReference type="CCDS" id="CCDS39558.1"/>
<dbReference type="RefSeq" id="NP_444457.2">
    <property type="nucleotide sequence ID" value="NM_053227.3"/>
</dbReference>
<dbReference type="SMR" id="Q9EQ47"/>
<dbReference type="STRING" id="10090.ENSMUSP00000154174"/>
<dbReference type="GlyCosmos" id="Q9EQ47">
    <property type="glycosylation" value="1 site, No reported glycans"/>
</dbReference>
<dbReference type="GlyGen" id="Q9EQ47">
    <property type="glycosylation" value="2 sites"/>
</dbReference>
<dbReference type="iPTMnet" id="Q9EQ47"/>
<dbReference type="PhosphoSitePlus" id="Q9EQ47"/>
<dbReference type="PaxDb" id="10090-ENSMUSP00000100706"/>
<dbReference type="DNASU" id="113854"/>
<dbReference type="Ensembl" id="ENSMUST00000089420.6">
    <property type="protein sequence ID" value="ENSMUSP00000100706.3"/>
    <property type="gene ID" value="ENSMUSG00000068234.8"/>
</dbReference>
<dbReference type="Ensembl" id="ENSMUST00000204656.3">
    <property type="protein sequence ID" value="ENSMUSP00000145135.3"/>
    <property type="gene ID" value="ENSMUSG00000068234.8"/>
</dbReference>
<dbReference type="Ensembl" id="ENSMUST00000226345.2">
    <property type="protein sequence ID" value="ENSMUSP00000154318.2"/>
    <property type="gene ID" value="ENSMUSG00000068234.8"/>
</dbReference>
<dbReference type="Ensembl" id="ENSMUST00000226760.2">
    <property type="protein sequence ID" value="ENSMUSP00000154174.2"/>
    <property type="gene ID" value="ENSMUSG00000068234.8"/>
</dbReference>
<dbReference type="Ensembl" id="ENSMUST00000227047.2">
    <property type="protein sequence ID" value="ENSMUSP00000153999.2"/>
    <property type="gene ID" value="ENSMUSG00000068234.8"/>
</dbReference>
<dbReference type="Ensembl" id="ENSMUST00000227456.2">
    <property type="protein sequence ID" value="ENSMUSP00000153772.2"/>
    <property type="gene ID" value="ENSMUSG00000068234.8"/>
</dbReference>
<dbReference type="Ensembl" id="ENSMUST00000228700.2">
    <property type="protein sequence ID" value="ENSMUSP00000154809.2"/>
    <property type="gene ID" value="ENSMUSG00000068234.8"/>
</dbReference>
<dbReference type="GeneID" id="113854"/>
<dbReference type="KEGG" id="mmu:113854"/>
<dbReference type="UCSC" id="uc009cwo.1">
    <property type="organism name" value="mouse"/>
</dbReference>
<dbReference type="AGR" id="MGI:2148517"/>
<dbReference type="CTD" id="113854"/>
<dbReference type="MGI" id="MGI:2148517">
    <property type="gene designation" value="Vmn1r44"/>
</dbReference>
<dbReference type="VEuPathDB" id="HostDB:ENSMUSG00000068234"/>
<dbReference type="eggNOG" id="ENOG502SNRJ">
    <property type="taxonomic scope" value="Eukaryota"/>
</dbReference>
<dbReference type="GeneTree" id="ENSGT01030000234553"/>
<dbReference type="HOGENOM" id="CLU_058641_0_0_1"/>
<dbReference type="InParanoid" id="Q9EQ47"/>
<dbReference type="OMA" id="ICTEKHM"/>
<dbReference type="OrthoDB" id="9620038at2759"/>
<dbReference type="PhylomeDB" id="Q9EQ47"/>
<dbReference type="BioGRID-ORCS" id="113854">
    <property type="hits" value="2 hits in 53 CRISPR screens"/>
</dbReference>
<dbReference type="PRO" id="PR:Q9EQ47"/>
<dbReference type="Proteomes" id="UP000000589">
    <property type="component" value="Chromosome 6"/>
</dbReference>
<dbReference type="RNAct" id="Q9EQ47">
    <property type="molecule type" value="protein"/>
</dbReference>
<dbReference type="Bgee" id="ENSMUSG00000068234">
    <property type="expression patterns" value="Expressed in spermatid"/>
</dbReference>
<dbReference type="ExpressionAtlas" id="Q9EQ47">
    <property type="expression patterns" value="baseline and differential"/>
</dbReference>
<dbReference type="GO" id="GO:0005886">
    <property type="term" value="C:plasma membrane"/>
    <property type="evidence" value="ECO:0007669"/>
    <property type="project" value="UniProtKB-SubCell"/>
</dbReference>
<dbReference type="GO" id="GO:0016503">
    <property type="term" value="F:pheromone receptor activity"/>
    <property type="evidence" value="ECO:0007669"/>
    <property type="project" value="InterPro"/>
</dbReference>
<dbReference type="GO" id="GO:0019236">
    <property type="term" value="P:response to pheromone"/>
    <property type="evidence" value="ECO:0007669"/>
    <property type="project" value="UniProtKB-KW"/>
</dbReference>
<dbReference type="GO" id="GO:0007606">
    <property type="term" value="P:sensory perception of chemical stimulus"/>
    <property type="evidence" value="ECO:0000304"/>
    <property type="project" value="MGI"/>
</dbReference>
<dbReference type="CDD" id="cd13949">
    <property type="entry name" value="7tm_V1R_pheromone"/>
    <property type="match status" value="1"/>
</dbReference>
<dbReference type="FunFam" id="1.20.1070.10:FF:000051">
    <property type="entry name" value="Vomeronasal type-1 receptor"/>
    <property type="match status" value="1"/>
</dbReference>
<dbReference type="Gene3D" id="1.20.1070.10">
    <property type="entry name" value="Rhodopsin 7-helix transmembrane proteins"/>
    <property type="match status" value="1"/>
</dbReference>
<dbReference type="InterPro" id="IPR017452">
    <property type="entry name" value="GPCR_Rhodpsn_7TM"/>
</dbReference>
<dbReference type="InterPro" id="IPR004072">
    <property type="entry name" value="Vmron_rcpt_1"/>
</dbReference>
<dbReference type="PANTHER" id="PTHR24062">
    <property type="entry name" value="VOMERONASAL TYPE-1 RECEPTOR"/>
    <property type="match status" value="1"/>
</dbReference>
<dbReference type="Pfam" id="PF03402">
    <property type="entry name" value="V1R"/>
    <property type="match status" value="1"/>
</dbReference>
<dbReference type="PRINTS" id="PR01534">
    <property type="entry name" value="VOMERONASL1R"/>
</dbReference>
<dbReference type="SUPFAM" id="SSF81321">
    <property type="entry name" value="Family A G protein-coupled receptor-like"/>
    <property type="match status" value="1"/>
</dbReference>
<dbReference type="PROSITE" id="PS50262">
    <property type="entry name" value="G_PROTEIN_RECEP_F1_2"/>
    <property type="match status" value="1"/>
</dbReference>
<gene>
    <name type="primary">Vmn1r44</name>
    <name evidence="8" type="synonym">V1ra10</name>
    <name evidence="7" type="synonym">V1rb11</name>
    <name type="synonym">V1rb4</name>
</gene>
<proteinExistence type="evidence at transcript level"/>
<reference evidence="5" key="1">
    <citation type="journal article" date="2000" name="Genome Res.">
        <title>Sequence diversity and genomic organization of vomeronasal receptor genes in the mouse.</title>
        <authorList>
            <person name="Del Punta K."/>
            <person name="Rothman A."/>
            <person name="Rodriguez I."/>
            <person name="Mombaerts P."/>
        </authorList>
    </citation>
    <scope>NUCLEOTIDE SEQUENCE [GENOMIC DNA]</scope>
    <source>
        <strain evidence="5">129/SvJ</strain>
    </source>
</reference>
<reference evidence="8" key="2">
    <citation type="submission" date="2001-06" db="EMBL/GenBank/DDBJ databases">
        <title>Vomeronasal receptor gene diversity in the mammalian genome.</title>
        <authorList>
            <person name="Sam M."/>
            <person name="Matsunami H."/>
            <person name="Buck L."/>
        </authorList>
    </citation>
    <scope>NUCLEOTIDE SEQUENCE [GENOMIC DNA]</scope>
</reference>
<reference evidence="8" key="3">
    <citation type="submission" date="2005-07" db="EMBL/GenBank/DDBJ databases">
        <authorList>
            <person name="Mural R.J."/>
            <person name="Adams M.D."/>
            <person name="Myers E.W."/>
            <person name="Smith H.O."/>
            <person name="Venter J.C."/>
        </authorList>
    </citation>
    <scope>NUCLEOTIDE SEQUENCE [LARGE SCALE GENOMIC DNA]</scope>
</reference>
<reference evidence="6" key="4">
    <citation type="journal article" date="2004" name="Genome Res.">
        <title>The status, quality, and expansion of the NIH full-length cDNA project: the Mammalian Gene Collection (MGC).</title>
        <authorList>
            <consortium name="The MGC Project Team"/>
        </authorList>
    </citation>
    <scope>NUCLEOTIDE SEQUENCE [LARGE SCALE MRNA]</scope>
    <source>
        <tissue>Brain</tissue>
    </source>
</reference>
<reference evidence="7" key="5">
    <citation type="journal article" date="2002" name="Nat. Neurosci.">
        <title>Multiple new and isolated families within the mouse superfamily of V1r vomeronasal receptors.</title>
        <authorList>
            <person name="Rodriguez I."/>
            <person name="Del Punta K."/>
            <person name="Rothman A."/>
            <person name="Ishii T."/>
            <person name="Mombaerts P."/>
        </authorList>
    </citation>
    <scope>NUCLEOTIDE SEQUENCE [GENOMIC DNA] OF 1-296</scope>
</reference>
<reference evidence="4" key="6">
    <citation type="journal article" date="2002" name="Nature">
        <title>Deficient pheromone responses in mice lacking a cluster of vomeronasal receptor genes.</title>
        <authorList>
            <person name="Del Punta K."/>
            <person name="Leinders-Zufall T."/>
            <person name="Rodriguez I."/>
            <person name="Jukam D."/>
            <person name="Wysocki C.J."/>
            <person name="Ogawa S."/>
            <person name="Zufall F."/>
            <person name="Mombaerts P."/>
        </authorList>
    </citation>
    <scope>PUTATIVE FUNCTION</scope>
    <scope>DISRUPTION PHENOTYPE</scope>
</reference>
<keyword id="KW-1003">Cell membrane</keyword>
<keyword id="KW-1015">Disulfide bond</keyword>
<keyword id="KW-0297">G-protein coupled receptor</keyword>
<keyword id="KW-0325">Glycoprotein</keyword>
<keyword id="KW-0472">Membrane</keyword>
<keyword id="KW-0589">Pheromone response</keyword>
<keyword id="KW-0675">Receptor</keyword>
<keyword id="KW-1185">Reference proteome</keyword>
<keyword id="KW-0807">Transducer</keyword>
<keyword id="KW-0812">Transmembrane</keyword>
<keyword id="KW-1133">Transmembrane helix</keyword>
<organism>
    <name type="scientific">Mus musculus</name>
    <name type="common">Mouse</name>
    <dbReference type="NCBI Taxonomy" id="10090"/>
    <lineage>
        <taxon>Eukaryota</taxon>
        <taxon>Metazoa</taxon>
        <taxon>Chordata</taxon>
        <taxon>Craniata</taxon>
        <taxon>Vertebrata</taxon>
        <taxon>Euteleostomi</taxon>
        <taxon>Mammalia</taxon>
        <taxon>Eutheria</taxon>
        <taxon>Euarchontoglires</taxon>
        <taxon>Glires</taxon>
        <taxon>Rodentia</taxon>
        <taxon>Myomorpha</taxon>
        <taxon>Muroidea</taxon>
        <taxon>Muridae</taxon>
        <taxon>Murinae</taxon>
        <taxon>Mus</taxon>
        <taxon>Mus</taxon>
    </lineage>
</organism>
<feature type="chain" id="PRO_0000239976" description="Vomeronasal type-1 receptor 44">
    <location>
        <begin position="1"/>
        <end position="310"/>
    </location>
</feature>
<feature type="topological domain" description="Extracellular" evidence="1">
    <location>
        <begin position="1"/>
        <end position="20"/>
    </location>
</feature>
<feature type="transmembrane region" description="Helical; Name=1" evidence="1">
    <location>
        <begin position="21"/>
        <end position="41"/>
    </location>
</feature>
<feature type="topological domain" description="Cytoplasmic" evidence="1">
    <location>
        <begin position="42"/>
        <end position="50"/>
    </location>
</feature>
<feature type="transmembrane region" description="Helical; Name=2" evidence="1">
    <location>
        <begin position="51"/>
        <end position="71"/>
    </location>
</feature>
<feature type="topological domain" description="Extracellular" evidence="1">
    <location>
        <begin position="72"/>
        <end position="93"/>
    </location>
</feature>
<feature type="transmembrane region" description="Helical; Name=3" evidence="1">
    <location>
        <begin position="94"/>
        <end position="114"/>
    </location>
</feature>
<feature type="topological domain" description="Cytoplasmic" evidence="1">
    <location>
        <begin position="115"/>
        <end position="131"/>
    </location>
</feature>
<feature type="transmembrane region" description="Helical; Name=4" evidence="1">
    <location>
        <begin position="132"/>
        <end position="152"/>
    </location>
</feature>
<feature type="topological domain" description="Extracellular" evidence="1">
    <location>
        <begin position="153"/>
        <end position="190"/>
    </location>
</feature>
<feature type="transmembrane region" description="Helical; Name=5" evidence="1">
    <location>
        <begin position="191"/>
        <end position="211"/>
    </location>
</feature>
<feature type="topological domain" description="Cytoplasmic" evidence="1">
    <location>
        <begin position="212"/>
        <end position="238"/>
    </location>
</feature>
<feature type="transmembrane region" description="Helical; Name=6" evidence="1">
    <location>
        <begin position="239"/>
        <end position="259"/>
    </location>
</feature>
<feature type="topological domain" description="Extracellular" evidence="1">
    <location>
        <begin position="260"/>
        <end position="268"/>
    </location>
</feature>
<feature type="transmembrane region" description="Helical; Name=7" evidence="1">
    <location>
        <begin position="269"/>
        <end position="289"/>
    </location>
</feature>
<feature type="topological domain" description="Cytoplasmic" evidence="1">
    <location>
        <begin position="290"/>
        <end position="310"/>
    </location>
</feature>
<feature type="glycosylation site" description="N-linked (GlcNAc...) asparagine" evidence="1">
    <location>
        <position position="159"/>
    </location>
</feature>
<feature type="disulfide bond" evidence="2">
    <location>
        <begin position="85"/>
        <end position="172"/>
    </location>
</feature>
<feature type="sequence conflict" description="In Ref. 1; AAG42086 and 4; AAI07185/AAI07186." evidence="4" ref="1 4">
    <original>K</original>
    <variation>L</variation>
    <location>
        <position position="3"/>
    </location>
</feature>
<feature type="sequence conflict" description="In Ref. 1; AAG42086." evidence="4" ref="1">
    <original>T</original>
    <variation>S</variation>
    <location>
        <position position="11"/>
    </location>
</feature>
<feature type="sequence conflict" description="In Ref. 4; AAI07185." evidence="4" ref="4">
    <original>A</original>
    <variation>V</variation>
    <location>
        <position position="308"/>
    </location>
</feature>
<protein>
    <recommendedName>
        <fullName>Vomeronasal type-1 receptor 44</fullName>
    </recommendedName>
    <alternativeName>
        <fullName>Vomeronasal type-1 receptor A10</fullName>
    </alternativeName>
    <alternativeName>
        <fullName>Vomeronasal type-1 receptor B11</fullName>
    </alternativeName>
    <alternativeName>
        <fullName>Vomeronasal type-1 receptor B4</fullName>
    </alternativeName>
</protein>
<name>V1R44_MOUSE</name>
<sequence length="310" mass="35388">MNKANLLHIDTNIKITLLAEVSVGISANSILFIAYLCMLLGENRHKPIDLYIAFLSLTQLMLLITMGLIAVDMFMPWGRWDSTTCQSLIYLHRFLRGLTLCATCLLNVLWTITLSSRNSCLAKFKHKYPHHISGAFLFLCVLYMSFSSHFLVSMTVTPNLTSENFMYVTQSCSLLPMSYSRTSMFSTPVAIRETFLISLMALSSGYMVALLWRHKKQAQHLRSTSLSSKASPEQRATRTILLLMSFFVVFYILDTVIFHSRMKFKDGSILYCFQIIVSHSYVTVSPFVFICTEKHIIKFLRSMCGRIANI</sequence>
<comment type="function">
    <text evidence="3">Putative pheromone receptor implicated in the regulation of social and reproductive behavior.</text>
</comment>
<comment type="subcellular location">
    <subcellularLocation>
        <location evidence="4">Cell membrane</location>
        <topology evidence="1">Multi-pass membrane protein</topology>
    </subcellularLocation>
</comment>
<comment type="disruption phenotype">
    <text evidence="3">Mice lacking all but one V1ra and V1rb gene (12% of the V1r repertoire) show a lack of chemosensory response to a subset of known pheromonal ligands and changes in maternal aggression as well as male reproductive behavior.</text>
</comment>
<comment type="similarity">
    <text evidence="2">Belongs to the G-protein coupled receptor 1 family.</text>
</comment>
<comment type="sequence caution" evidence="4">
    <conflict type="frameshift">
        <sequence resource="EMBL-CDS" id="AAL47870"/>
    </conflict>
</comment>